<dbReference type="EC" id="3.8.1.5" evidence="2"/>
<dbReference type="EMBL" id="AE005673">
    <property type="protein sequence ID" value="AAK23159.1"/>
    <property type="molecule type" value="Genomic_DNA"/>
</dbReference>
<dbReference type="PIR" id="C87395">
    <property type="entry name" value="C87395"/>
</dbReference>
<dbReference type="RefSeq" id="NP_419991.1">
    <property type="nucleotide sequence ID" value="NC_002696.2"/>
</dbReference>
<dbReference type="RefSeq" id="WP_010919059.1">
    <property type="nucleotide sequence ID" value="NC_002696.2"/>
</dbReference>
<dbReference type="PDB" id="5ESR">
    <property type="method" value="X-ray"/>
    <property type="resolution" value="1.48 A"/>
    <property type="chains" value="A=1-302"/>
</dbReference>
<dbReference type="PDBsum" id="5ESR"/>
<dbReference type="SMR" id="Q9A919"/>
<dbReference type="STRING" id="190650.CC_1175"/>
<dbReference type="ESTHER" id="caucr-CC1175">
    <property type="family name" value="Haloalkane_dehalogenase-HLD1"/>
</dbReference>
<dbReference type="EnsemblBacteria" id="AAK23159">
    <property type="protein sequence ID" value="AAK23159"/>
    <property type="gene ID" value="CC_1175"/>
</dbReference>
<dbReference type="KEGG" id="ccr:CC_1175"/>
<dbReference type="PATRIC" id="fig|190650.5.peg.1198"/>
<dbReference type="eggNOG" id="COG0596">
    <property type="taxonomic scope" value="Bacteria"/>
</dbReference>
<dbReference type="HOGENOM" id="CLU_020336_13_3_5"/>
<dbReference type="BioCyc" id="CAULO:CC1175-MONOMER"/>
<dbReference type="BRENDA" id="3.8.1.5">
    <property type="organism ID" value="1218"/>
</dbReference>
<dbReference type="Proteomes" id="UP000001816">
    <property type="component" value="Chromosome"/>
</dbReference>
<dbReference type="GO" id="GO:0004301">
    <property type="term" value="F:epoxide hydrolase activity"/>
    <property type="evidence" value="ECO:0007669"/>
    <property type="project" value="TreeGrafter"/>
</dbReference>
<dbReference type="GO" id="GO:0018786">
    <property type="term" value="F:haloalkane dehalogenase activity"/>
    <property type="evidence" value="ECO:0007669"/>
    <property type="project" value="UniProtKB-UniRule"/>
</dbReference>
<dbReference type="Gene3D" id="3.40.50.1820">
    <property type="entry name" value="alpha/beta hydrolase"/>
    <property type="match status" value="1"/>
</dbReference>
<dbReference type="HAMAP" id="MF_01230">
    <property type="entry name" value="Haloalk_dehal_type1"/>
    <property type="match status" value="1"/>
</dbReference>
<dbReference type="InterPro" id="IPR000073">
    <property type="entry name" value="AB_hydrolase_1"/>
</dbReference>
<dbReference type="InterPro" id="IPR029058">
    <property type="entry name" value="AB_hydrolase_fold"/>
</dbReference>
<dbReference type="InterPro" id="IPR000639">
    <property type="entry name" value="Epox_hydrolase-like"/>
</dbReference>
<dbReference type="InterPro" id="IPR051340">
    <property type="entry name" value="Haloalkane_dehalogenase"/>
</dbReference>
<dbReference type="InterPro" id="IPR023489">
    <property type="entry name" value="Haloalkane_dehalogenase_1"/>
</dbReference>
<dbReference type="NCBIfam" id="NF002043">
    <property type="entry name" value="PRK00870.1"/>
    <property type="match status" value="1"/>
</dbReference>
<dbReference type="PANTHER" id="PTHR42977:SF3">
    <property type="entry name" value="AB HYDROLASE-1 DOMAIN-CONTAINING PROTEIN"/>
    <property type="match status" value="1"/>
</dbReference>
<dbReference type="PANTHER" id="PTHR42977">
    <property type="entry name" value="HYDROLASE-RELATED"/>
    <property type="match status" value="1"/>
</dbReference>
<dbReference type="Pfam" id="PF00561">
    <property type="entry name" value="Abhydrolase_1"/>
    <property type="match status" value="1"/>
</dbReference>
<dbReference type="PRINTS" id="PR00111">
    <property type="entry name" value="ABHYDROLASE"/>
</dbReference>
<dbReference type="PRINTS" id="PR00412">
    <property type="entry name" value="EPOXHYDRLASE"/>
</dbReference>
<dbReference type="SUPFAM" id="SSF53474">
    <property type="entry name" value="alpha/beta-Hydrolases"/>
    <property type="match status" value="1"/>
</dbReference>
<feature type="chain" id="PRO_0000216765" description="Haloalkane dehalogenase">
    <location>
        <begin position="1"/>
        <end position="302"/>
    </location>
</feature>
<feature type="domain" description="AB hydrolase-1" evidence="1">
    <location>
        <begin position="48"/>
        <end position="152"/>
    </location>
</feature>
<feature type="active site" description="Nucleophile" evidence="2">
    <location>
        <position position="123"/>
    </location>
</feature>
<feature type="active site" description="Proton donor" evidence="2">
    <location>
        <position position="249"/>
    </location>
</feature>
<feature type="active site" description="Proton acceptor" evidence="2">
    <location>
        <position position="278"/>
    </location>
</feature>
<feature type="helix" evidence="3">
    <location>
        <begin position="8"/>
        <end position="11"/>
    </location>
</feature>
<feature type="strand" evidence="3">
    <location>
        <begin position="22"/>
        <end position="27"/>
    </location>
</feature>
<feature type="strand" evidence="3">
    <location>
        <begin position="33"/>
        <end position="42"/>
    </location>
</feature>
<feature type="strand" evidence="3">
    <location>
        <begin position="48"/>
        <end position="52"/>
    </location>
</feature>
<feature type="helix" evidence="3">
    <location>
        <begin position="59"/>
        <end position="62"/>
    </location>
</feature>
<feature type="helix" evidence="3">
    <location>
        <begin position="63"/>
        <end position="71"/>
    </location>
</feature>
<feature type="strand" evidence="3">
    <location>
        <begin position="75"/>
        <end position="79"/>
    </location>
</feature>
<feature type="strand" evidence="3">
    <location>
        <begin position="89"/>
        <end position="92"/>
    </location>
</feature>
<feature type="helix" evidence="3">
    <location>
        <begin position="93"/>
        <end position="95"/>
    </location>
</feature>
<feature type="helix" evidence="3">
    <location>
        <begin position="98"/>
        <end position="111"/>
    </location>
</feature>
<feature type="strand" evidence="3">
    <location>
        <begin position="116"/>
        <end position="122"/>
    </location>
</feature>
<feature type="helix" evidence="3">
    <location>
        <begin position="124"/>
        <end position="135"/>
    </location>
</feature>
<feature type="helix" evidence="3">
    <location>
        <begin position="137"/>
        <end position="139"/>
    </location>
</feature>
<feature type="strand" evidence="3">
    <location>
        <begin position="140"/>
        <end position="147"/>
    </location>
</feature>
<feature type="helix" evidence="3">
    <location>
        <begin position="158"/>
        <end position="169"/>
    </location>
</feature>
<feature type="helix" evidence="3">
    <location>
        <begin position="175"/>
        <end position="181"/>
    </location>
</feature>
<feature type="helix" evidence="3">
    <location>
        <begin position="189"/>
        <end position="196"/>
    </location>
</feature>
<feature type="helix" evidence="3">
    <location>
        <begin position="202"/>
        <end position="205"/>
    </location>
</feature>
<feature type="helix" evidence="3">
    <location>
        <begin position="206"/>
        <end position="214"/>
    </location>
</feature>
<feature type="helix" evidence="3">
    <location>
        <begin position="224"/>
        <end position="234"/>
    </location>
</feature>
<feature type="strand" evidence="3">
    <location>
        <begin position="241"/>
        <end position="243"/>
    </location>
</feature>
<feature type="strand" evidence="3">
    <location>
        <begin position="246"/>
        <end position="248"/>
    </location>
</feature>
<feature type="turn" evidence="3">
    <location>
        <begin position="250"/>
        <end position="252"/>
    </location>
</feature>
<feature type="helix" evidence="3">
    <location>
        <begin position="253"/>
        <end position="255"/>
    </location>
</feature>
<feature type="helix" evidence="3">
    <location>
        <begin position="256"/>
        <end position="262"/>
    </location>
</feature>
<feature type="helix" evidence="3">
    <location>
        <begin position="264"/>
        <end position="266"/>
    </location>
</feature>
<feature type="strand" evidence="3">
    <location>
        <begin position="274"/>
        <end position="279"/>
    </location>
</feature>
<feature type="helix" evidence="3">
    <location>
        <begin position="280"/>
        <end position="283"/>
    </location>
</feature>
<feature type="helix" evidence="3">
    <location>
        <begin position="285"/>
        <end position="298"/>
    </location>
</feature>
<feature type="helix" evidence="3">
    <location>
        <begin position="299"/>
        <end position="301"/>
    </location>
</feature>
<sequence length="302" mass="33155">MDVLRTPDERFEGLADWSFAPHYTEVTDADGTALRIHHVDEGPKDQRPILLMHGEPSWAYLYRKVIAELVAKGHRVVAPDLVGFGRSDKPAKRTDYTYERHVAWMSAWLEQNDLKDIVLFCQDWGGLIGLRLVAAFPERFSAVVVSNTGLPIGVGKSEGFEAWLNFSQNTPELPVGFILNGGTARDLSDAERSAYDAPFPDESYKEGARIFPALVPITPEHASVEENKAAWAVLETFDKPFVTAFSDADPITRGGEAMFLARVPGTKNVAHTTLKGGHFVQEDSPVEIAALLDGLVAGLPQA</sequence>
<evidence type="ECO:0000255" key="1"/>
<evidence type="ECO:0000255" key="2">
    <source>
        <dbReference type="HAMAP-Rule" id="MF_01230"/>
    </source>
</evidence>
<evidence type="ECO:0007829" key="3">
    <source>
        <dbReference type="PDB" id="5ESR"/>
    </source>
</evidence>
<gene>
    <name evidence="2" type="primary">dhmA</name>
    <name type="ordered locus">CC_1175</name>
</gene>
<name>DHMA_CAUVC</name>
<comment type="function">
    <text evidence="2">Catalyzes hydrolytic cleavage of carbon-halogen bonds in halogenated aliphatic compounds, leading to the formation of the corresponding primary alcohols, halide ions and protons.</text>
</comment>
<comment type="catalytic activity">
    <reaction evidence="2">
        <text>1-haloalkane + H2O = a halide anion + a primary alcohol + H(+)</text>
        <dbReference type="Rhea" id="RHEA:19081"/>
        <dbReference type="ChEBI" id="CHEBI:15377"/>
        <dbReference type="ChEBI" id="CHEBI:15378"/>
        <dbReference type="ChEBI" id="CHEBI:15734"/>
        <dbReference type="ChEBI" id="CHEBI:16042"/>
        <dbReference type="ChEBI" id="CHEBI:18060"/>
        <dbReference type="EC" id="3.8.1.5"/>
    </reaction>
</comment>
<comment type="subunit">
    <text evidence="2">Monomer.</text>
</comment>
<comment type="similarity">
    <text evidence="2">Belongs to the haloalkane dehalogenase family. Type 1 subfamily.</text>
</comment>
<organism>
    <name type="scientific">Caulobacter vibrioides (strain ATCC 19089 / CIP 103742 / CB 15)</name>
    <name type="common">Caulobacter crescentus</name>
    <dbReference type="NCBI Taxonomy" id="190650"/>
    <lineage>
        <taxon>Bacteria</taxon>
        <taxon>Pseudomonadati</taxon>
        <taxon>Pseudomonadota</taxon>
        <taxon>Alphaproteobacteria</taxon>
        <taxon>Caulobacterales</taxon>
        <taxon>Caulobacteraceae</taxon>
        <taxon>Caulobacter</taxon>
    </lineage>
</organism>
<reference key="1">
    <citation type="journal article" date="2001" name="Proc. Natl. Acad. Sci. U.S.A.">
        <title>Complete genome sequence of Caulobacter crescentus.</title>
        <authorList>
            <person name="Nierman W.C."/>
            <person name="Feldblyum T.V."/>
            <person name="Laub M.T."/>
            <person name="Paulsen I.T."/>
            <person name="Nelson K.E."/>
            <person name="Eisen J.A."/>
            <person name="Heidelberg J.F."/>
            <person name="Alley M.R.K."/>
            <person name="Ohta N."/>
            <person name="Maddock J.R."/>
            <person name="Potocka I."/>
            <person name="Nelson W.C."/>
            <person name="Newton A."/>
            <person name="Stephens C."/>
            <person name="Phadke N.D."/>
            <person name="Ely B."/>
            <person name="DeBoy R.T."/>
            <person name="Dodson R.J."/>
            <person name="Durkin A.S."/>
            <person name="Gwinn M.L."/>
            <person name="Haft D.H."/>
            <person name="Kolonay J.F."/>
            <person name="Smit J."/>
            <person name="Craven M.B."/>
            <person name="Khouri H.M."/>
            <person name="Shetty J."/>
            <person name="Berry K.J."/>
            <person name="Utterback T.R."/>
            <person name="Tran K."/>
            <person name="Wolf A.M."/>
            <person name="Vamathevan J.J."/>
            <person name="Ermolaeva M.D."/>
            <person name="White O."/>
            <person name="Salzberg S.L."/>
            <person name="Venter J.C."/>
            <person name="Shapiro L."/>
            <person name="Fraser C.M."/>
        </authorList>
    </citation>
    <scope>NUCLEOTIDE SEQUENCE [LARGE SCALE GENOMIC DNA]</scope>
    <source>
        <strain>ATCC 19089 / CIP 103742 / CB 15</strain>
    </source>
</reference>
<protein>
    <recommendedName>
        <fullName evidence="2">Haloalkane dehalogenase</fullName>
        <ecNumber evidence="2">3.8.1.5</ecNumber>
    </recommendedName>
</protein>
<accession>Q9A919</accession>
<proteinExistence type="evidence at protein level"/>
<keyword id="KW-0002">3D-structure</keyword>
<keyword id="KW-0378">Hydrolase</keyword>
<keyword id="KW-1185">Reference proteome</keyword>